<comment type="catalytic activity">
    <reaction evidence="1">
        <text>1-(5-phospho-beta-D-ribosyl)-5-[(5-phospho-beta-D-ribosylamino)methylideneamino]imidazole-4-carboxamide = 5-[(5-phospho-1-deoxy-D-ribulos-1-ylimino)methylamino]-1-(5-phospho-beta-D-ribosyl)imidazole-4-carboxamide</text>
        <dbReference type="Rhea" id="RHEA:15469"/>
        <dbReference type="ChEBI" id="CHEBI:58435"/>
        <dbReference type="ChEBI" id="CHEBI:58525"/>
        <dbReference type="EC" id="5.3.1.16"/>
    </reaction>
</comment>
<comment type="pathway">
    <text evidence="1">Amino-acid biosynthesis; L-histidine biosynthesis; L-histidine from 5-phospho-alpha-D-ribose 1-diphosphate: step 4/9.</text>
</comment>
<comment type="subcellular location">
    <subcellularLocation>
        <location evidence="1">Cytoplasm</location>
    </subcellularLocation>
</comment>
<comment type="similarity">
    <text evidence="1">Belongs to the HisA/HisF family.</text>
</comment>
<proteinExistence type="inferred from homology"/>
<gene>
    <name evidence="1" type="primary">hisA</name>
    <name type="ordered locus">SYO3AOP1_1665</name>
</gene>
<sequence length="239" mass="26310">MTLKEFIIPAIDIKGGKVVRLYKGEFDKVKVYNENPIDMAKYFEDAGAEHIHVVDLDGALEGLPKNIKILESIVRSVNIPIEFGGGLRSFEAVKAVLDLGVERVVIGSLAYQNPEEFYKIVESFPNKVIVGIDAKDGKVAIKGWTEKTEVSPLEFAKKYDDLDIFGFLFTDVSRDGSMIGANVEATVELAKNLKHPVIASGGVGSLEDVIKLYEKREFGIFGVVVGKAIYEGKIDLKEI</sequence>
<reference key="1">
    <citation type="journal article" date="2009" name="J. Bacteriol.">
        <title>Complete and draft genome sequences of six members of the Aquificales.</title>
        <authorList>
            <person name="Reysenbach A.-L."/>
            <person name="Hamamura N."/>
            <person name="Podar M."/>
            <person name="Griffiths E."/>
            <person name="Ferreira S."/>
            <person name="Hochstein R."/>
            <person name="Heidelberg J."/>
            <person name="Johnson J."/>
            <person name="Mead D."/>
            <person name="Pohorille A."/>
            <person name="Sarmiento M."/>
            <person name="Schweighofer K."/>
            <person name="Seshadri R."/>
            <person name="Voytek M.A."/>
        </authorList>
    </citation>
    <scope>NUCLEOTIDE SEQUENCE [LARGE SCALE GENOMIC DNA]</scope>
    <source>
        <strain>YO3AOP1</strain>
    </source>
</reference>
<evidence type="ECO:0000255" key="1">
    <source>
        <dbReference type="HAMAP-Rule" id="MF_01014"/>
    </source>
</evidence>
<dbReference type="EC" id="5.3.1.16" evidence="1"/>
<dbReference type="EMBL" id="CP001080">
    <property type="protein sequence ID" value="ACD67263.1"/>
    <property type="molecule type" value="Genomic_DNA"/>
</dbReference>
<dbReference type="RefSeq" id="WP_012460319.1">
    <property type="nucleotide sequence ID" value="NC_010730.1"/>
</dbReference>
<dbReference type="SMR" id="B2V6T1"/>
<dbReference type="STRING" id="436114.SYO3AOP1_1665"/>
<dbReference type="KEGG" id="sul:SYO3AOP1_1665"/>
<dbReference type="eggNOG" id="COG0106">
    <property type="taxonomic scope" value="Bacteria"/>
</dbReference>
<dbReference type="HOGENOM" id="CLU_048577_1_2_0"/>
<dbReference type="UniPathway" id="UPA00031">
    <property type="reaction ID" value="UER00009"/>
</dbReference>
<dbReference type="GO" id="GO:0005737">
    <property type="term" value="C:cytoplasm"/>
    <property type="evidence" value="ECO:0007669"/>
    <property type="project" value="UniProtKB-SubCell"/>
</dbReference>
<dbReference type="GO" id="GO:0003949">
    <property type="term" value="F:1-(5-phosphoribosyl)-5-[(5-phosphoribosylamino)methylideneamino]imidazole-4-carboxamide isomerase activity"/>
    <property type="evidence" value="ECO:0007669"/>
    <property type="project" value="UniProtKB-UniRule"/>
</dbReference>
<dbReference type="GO" id="GO:0000105">
    <property type="term" value="P:L-histidine biosynthetic process"/>
    <property type="evidence" value="ECO:0007669"/>
    <property type="project" value="UniProtKB-UniRule"/>
</dbReference>
<dbReference type="GO" id="GO:0000162">
    <property type="term" value="P:L-tryptophan biosynthetic process"/>
    <property type="evidence" value="ECO:0007669"/>
    <property type="project" value="TreeGrafter"/>
</dbReference>
<dbReference type="CDD" id="cd04732">
    <property type="entry name" value="HisA"/>
    <property type="match status" value="1"/>
</dbReference>
<dbReference type="FunFam" id="3.20.20.70:FF:000009">
    <property type="entry name" value="1-(5-phosphoribosyl)-5-[(5-phosphoribosylamino)methylideneamino] imidazole-4-carboxamide isomerase"/>
    <property type="match status" value="1"/>
</dbReference>
<dbReference type="Gene3D" id="3.20.20.70">
    <property type="entry name" value="Aldolase class I"/>
    <property type="match status" value="1"/>
</dbReference>
<dbReference type="HAMAP" id="MF_01014">
    <property type="entry name" value="HisA"/>
    <property type="match status" value="1"/>
</dbReference>
<dbReference type="InterPro" id="IPR013785">
    <property type="entry name" value="Aldolase_TIM"/>
</dbReference>
<dbReference type="InterPro" id="IPR006062">
    <property type="entry name" value="His_biosynth"/>
</dbReference>
<dbReference type="InterPro" id="IPR006063">
    <property type="entry name" value="HisA_bact_arch"/>
</dbReference>
<dbReference type="InterPro" id="IPR044524">
    <property type="entry name" value="Isoase_HisA-like"/>
</dbReference>
<dbReference type="InterPro" id="IPR023016">
    <property type="entry name" value="Isoase_HisA-like_bact"/>
</dbReference>
<dbReference type="InterPro" id="IPR011060">
    <property type="entry name" value="RibuloseP-bd_barrel"/>
</dbReference>
<dbReference type="NCBIfam" id="TIGR00007">
    <property type="entry name" value="1-(5-phosphoribosyl)-5-[(5-phosphoribosylamino)methylideneamino]imidazole-4-carboxamide isomerase"/>
    <property type="match status" value="1"/>
</dbReference>
<dbReference type="NCBIfam" id="NF010112">
    <property type="entry name" value="PRK13585.1"/>
    <property type="match status" value="1"/>
</dbReference>
<dbReference type="PANTHER" id="PTHR43090">
    <property type="entry name" value="1-(5-PHOSPHORIBOSYL)-5-[(5-PHOSPHORIBOSYLAMINO)METHYLIDENEAMINO] IMIDAZOLE-4-CARBOXAMIDE ISOMERASE"/>
    <property type="match status" value="1"/>
</dbReference>
<dbReference type="PANTHER" id="PTHR43090:SF2">
    <property type="entry name" value="1-(5-PHOSPHORIBOSYL)-5-[(5-PHOSPHORIBOSYLAMINO)METHYLIDENEAMINO] IMIDAZOLE-4-CARBOXAMIDE ISOMERASE"/>
    <property type="match status" value="1"/>
</dbReference>
<dbReference type="Pfam" id="PF00977">
    <property type="entry name" value="His_biosynth"/>
    <property type="match status" value="1"/>
</dbReference>
<dbReference type="SUPFAM" id="SSF51366">
    <property type="entry name" value="Ribulose-phoshate binding barrel"/>
    <property type="match status" value="1"/>
</dbReference>
<keyword id="KW-0028">Amino-acid biosynthesis</keyword>
<keyword id="KW-0963">Cytoplasm</keyword>
<keyword id="KW-0368">Histidine biosynthesis</keyword>
<keyword id="KW-0413">Isomerase</keyword>
<feature type="chain" id="PRO_1000190563" description="1-(5-phosphoribosyl)-5-[(5-phosphoribosylamino)methylideneamino] imidazole-4-carboxamide isomerase">
    <location>
        <begin position="1"/>
        <end position="239"/>
    </location>
</feature>
<feature type="active site" description="Proton acceptor" evidence="1">
    <location>
        <position position="12"/>
    </location>
</feature>
<feature type="active site" description="Proton donor" evidence="1">
    <location>
        <position position="133"/>
    </location>
</feature>
<name>HIS4_SULSY</name>
<protein>
    <recommendedName>
        <fullName evidence="1">1-(5-phosphoribosyl)-5-[(5-phosphoribosylamino)methylideneamino] imidazole-4-carboxamide isomerase</fullName>
        <ecNumber evidence="1">5.3.1.16</ecNumber>
    </recommendedName>
    <alternativeName>
        <fullName evidence="1">Phosphoribosylformimino-5-aminoimidazole carboxamide ribotide isomerase</fullName>
    </alternativeName>
</protein>
<organism>
    <name type="scientific">Sulfurihydrogenibium sp. (strain YO3AOP1)</name>
    <dbReference type="NCBI Taxonomy" id="436114"/>
    <lineage>
        <taxon>Bacteria</taxon>
        <taxon>Pseudomonadati</taxon>
        <taxon>Aquificota</taxon>
        <taxon>Aquificia</taxon>
        <taxon>Aquificales</taxon>
        <taxon>Hydrogenothermaceae</taxon>
        <taxon>Sulfurihydrogenibium</taxon>
    </lineage>
</organism>
<accession>B2V6T1</accession>